<protein>
    <recommendedName>
        <fullName evidence="1">Ribosome-binding factor A</fullName>
    </recommendedName>
</protein>
<reference key="1">
    <citation type="journal article" date="2006" name="J. Bacteriol.">
        <title>Comparison of the genome sequence of the poultry pathogen Bordetella avium with those of B. bronchiseptica, B. pertussis, and B. parapertussis reveals extensive diversity in surface structures associated with host interaction.</title>
        <authorList>
            <person name="Sebaihia M."/>
            <person name="Preston A."/>
            <person name="Maskell D.J."/>
            <person name="Kuzmiak H."/>
            <person name="Connell T.D."/>
            <person name="King N.D."/>
            <person name="Orndorff P.E."/>
            <person name="Miyamoto D.M."/>
            <person name="Thomson N.R."/>
            <person name="Harris D."/>
            <person name="Goble A."/>
            <person name="Lord A."/>
            <person name="Murphy L."/>
            <person name="Quail M.A."/>
            <person name="Rutter S."/>
            <person name="Squares R."/>
            <person name="Squares S."/>
            <person name="Woodward J."/>
            <person name="Parkhill J."/>
            <person name="Temple L.M."/>
        </authorList>
    </citation>
    <scope>NUCLEOTIDE SEQUENCE [LARGE SCALE GENOMIC DNA]</scope>
    <source>
        <strain>197N</strain>
    </source>
</reference>
<sequence>MSRHKSKSIPGRNLRLAEQIQKDLAGIIQREIDMTRAGLITLSGVELSADYAHAKVYFTVLGAEPDTAAALLNEKAGWLHSQLYKLLHIHTVPTLRFVHDPQLERGIEMSMLIDRANRGPHSGVPDEPEDQS</sequence>
<dbReference type="EMBL" id="AM167904">
    <property type="protein sequence ID" value="CAJ50003.1"/>
    <property type="molecule type" value="Genomic_DNA"/>
</dbReference>
<dbReference type="RefSeq" id="WP_012418054.1">
    <property type="nucleotide sequence ID" value="NC_010645.1"/>
</dbReference>
<dbReference type="SMR" id="Q2KXY9"/>
<dbReference type="STRING" id="360910.BAV2393"/>
<dbReference type="GeneID" id="92934432"/>
<dbReference type="KEGG" id="bav:BAV2393"/>
<dbReference type="eggNOG" id="COG0858">
    <property type="taxonomic scope" value="Bacteria"/>
</dbReference>
<dbReference type="HOGENOM" id="CLU_089475_5_1_4"/>
<dbReference type="OrthoDB" id="307788at2"/>
<dbReference type="Proteomes" id="UP000001977">
    <property type="component" value="Chromosome"/>
</dbReference>
<dbReference type="GO" id="GO:0005829">
    <property type="term" value="C:cytosol"/>
    <property type="evidence" value="ECO:0007669"/>
    <property type="project" value="TreeGrafter"/>
</dbReference>
<dbReference type="GO" id="GO:0043024">
    <property type="term" value="F:ribosomal small subunit binding"/>
    <property type="evidence" value="ECO:0007669"/>
    <property type="project" value="TreeGrafter"/>
</dbReference>
<dbReference type="GO" id="GO:0030490">
    <property type="term" value="P:maturation of SSU-rRNA"/>
    <property type="evidence" value="ECO:0007669"/>
    <property type="project" value="UniProtKB-UniRule"/>
</dbReference>
<dbReference type="Gene3D" id="3.30.300.20">
    <property type="match status" value="1"/>
</dbReference>
<dbReference type="HAMAP" id="MF_00003">
    <property type="entry name" value="RbfA"/>
    <property type="match status" value="1"/>
</dbReference>
<dbReference type="InterPro" id="IPR015946">
    <property type="entry name" value="KH_dom-like_a/b"/>
</dbReference>
<dbReference type="InterPro" id="IPR000238">
    <property type="entry name" value="RbfA"/>
</dbReference>
<dbReference type="InterPro" id="IPR023799">
    <property type="entry name" value="RbfA_dom_sf"/>
</dbReference>
<dbReference type="NCBIfam" id="TIGR00082">
    <property type="entry name" value="rbfA"/>
    <property type="match status" value="1"/>
</dbReference>
<dbReference type="PANTHER" id="PTHR33515">
    <property type="entry name" value="RIBOSOME-BINDING FACTOR A, CHLOROPLASTIC-RELATED"/>
    <property type="match status" value="1"/>
</dbReference>
<dbReference type="PANTHER" id="PTHR33515:SF1">
    <property type="entry name" value="RIBOSOME-BINDING FACTOR A, CHLOROPLASTIC-RELATED"/>
    <property type="match status" value="1"/>
</dbReference>
<dbReference type="Pfam" id="PF02033">
    <property type="entry name" value="RBFA"/>
    <property type="match status" value="1"/>
</dbReference>
<dbReference type="SUPFAM" id="SSF89919">
    <property type="entry name" value="Ribosome-binding factor A, RbfA"/>
    <property type="match status" value="1"/>
</dbReference>
<evidence type="ECO:0000255" key="1">
    <source>
        <dbReference type="HAMAP-Rule" id="MF_00003"/>
    </source>
</evidence>
<name>RBFA_BORA1</name>
<gene>
    <name evidence="1" type="primary">rbfA</name>
    <name type="ordered locus">BAV2393</name>
</gene>
<comment type="function">
    <text evidence="1">One of several proteins that assist in the late maturation steps of the functional core of the 30S ribosomal subunit. Associates with free 30S ribosomal subunits (but not with 30S subunits that are part of 70S ribosomes or polysomes). Required for efficient processing of 16S rRNA. May interact with the 5'-terminal helix region of 16S rRNA.</text>
</comment>
<comment type="subunit">
    <text evidence="1">Monomer. Binds 30S ribosomal subunits, but not 50S ribosomal subunits or 70S ribosomes.</text>
</comment>
<comment type="subcellular location">
    <subcellularLocation>
        <location evidence="1">Cytoplasm</location>
    </subcellularLocation>
</comment>
<comment type="similarity">
    <text evidence="1">Belongs to the RbfA family.</text>
</comment>
<proteinExistence type="inferred from homology"/>
<feature type="chain" id="PRO_1000000074" description="Ribosome-binding factor A">
    <location>
        <begin position="1"/>
        <end position="132"/>
    </location>
</feature>
<keyword id="KW-0963">Cytoplasm</keyword>
<keyword id="KW-1185">Reference proteome</keyword>
<keyword id="KW-0690">Ribosome biogenesis</keyword>
<accession>Q2KXY9</accession>
<organism>
    <name type="scientific">Bordetella avium (strain 197N)</name>
    <dbReference type="NCBI Taxonomy" id="360910"/>
    <lineage>
        <taxon>Bacteria</taxon>
        <taxon>Pseudomonadati</taxon>
        <taxon>Pseudomonadota</taxon>
        <taxon>Betaproteobacteria</taxon>
        <taxon>Burkholderiales</taxon>
        <taxon>Alcaligenaceae</taxon>
        <taxon>Bordetella</taxon>
    </lineage>
</organism>